<dbReference type="EMBL" id="BC091455">
    <property type="protein sequence ID" value="AAH91455.1"/>
    <property type="molecule type" value="mRNA"/>
</dbReference>
<dbReference type="SMR" id="Q5BJJ6"/>
<dbReference type="FunCoup" id="Q5BJJ6">
    <property type="interactions" value="681"/>
</dbReference>
<dbReference type="STRING" id="7955.ENSDARP00000123222"/>
<dbReference type="PaxDb" id="7955-ENSDARP00000123222"/>
<dbReference type="DNASU" id="541347"/>
<dbReference type="AGR" id="ZFIN:ZDB-GENE-030131-786"/>
<dbReference type="ZFIN" id="ZDB-GENE-030131-786">
    <property type="gene designation" value="mat2b"/>
</dbReference>
<dbReference type="eggNOG" id="KOG1430">
    <property type="taxonomic scope" value="Eukaryota"/>
</dbReference>
<dbReference type="InParanoid" id="Q5BJJ6"/>
<dbReference type="PhylomeDB" id="Q5BJJ6"/>
<dbReference type="Reactome" id="R-DRE-156581">
    <property type="pathway name" value="Methylation"/>
</dbReference>
<dbReference type="Reactome" id="R-DRE-5689880">
    <property type="pathway name" value="Ub-specific processing proteases"/>
</dbReference>
<dbReference type="UniPathway" id="UPA00315">
    <property type="reaction ID" value="UER00080"/>
</dbReference>
<dbReference type="PRO" id="PR:Q5BJJ6"/>
<dbReference type="Proteomes" id="UP000000437">
    <property type="component" value="Unplaced"/>
</dbReference>
<dbReference type="GO" id="GO:0048269">
    <property type="term" value="C:methionine adenosyltransferase complex"/>
    <property type="evidence" value="ECO:0000250"/>
    <property type="project" value="UniProtKB"/>
</dbReference>
<dbReference type="GO" id="GO:0048270">
    <property type="term" value="F:methionine adenosyltransferase regulator activity"/>
    <property type="evidence" value="ECO:0000250"/>
    <property type="project" value="UniProtKB"/>
</dbReference>
<dbReference type="GO" id="GO:0006730">
    <property type="term" value="P:one-carbon metabolic process"/>
    <property type="evidence" value="ECO:0007669"/>
    <property type="project" value="UniProtKB-KW"/>
</dbReference>
<dbReference type="GO" id="GO:0006556">
    <property type="term" value="P:S-adenosylmethionine biosynthetic process"/>
    <property type="evidence" value="ECO:0000250"/>
    <property type="project" value="UniProtKB"/>
</dbReference>
<dbReference type="CDD" id="cd05254">
    <property type="entry name" value="dTDP_HR_like_SDR_e"/>
    <property type="match status" value="1"/>
</dbReference>
<dbReference type="FunFam" id="3.40.50.720:FF:000133">
    <property type="entry name" value="Methionine adenosyltransferase 2 subunit beta"/>
    <property type="match status" value="1"/>
</dbReference>
<dbReference type="Gene3D" id="3.40.50.720">
    <property type="entry name" value="NAD(P)-binding Rossmann-like Domain"/>
    <property type="match status" value="1"/>
</dbReference>
<dbReference type="InterPro" id="IPR005913">
    <property type="entry name" value="dTDP_dehydrorham_reduct"/>
</dbReference>
<dbReference type="InterPro" id="IPR036291">
    <property type="entry name" value="NAD(P)-bd_dom_sf"/>
</dbReference>
<dbReference type="InterPro" id="IPR029903">
    <property type="entry name" value="RmlD-like-bd"/>
</dbReference>
<dbReference type="PANTHER" id="PTHR10491">
    <property type="entry name" value="DTDP-4-DEHYDRORHAMNOSE REDUCTASE"/>
    <property type="match status" value="1"/>
</dbReference>
<dbReference type="PANTHER" id="PTHR10491:SF4">
    <property type="entry name" value="METHIONINE ADENOSYLTRANSFERASE 2 SUBUNIT BETA"/>
    <property type="match status" value="1"/>
</dbReference>
<dbReference type="Pfam" id="PF04321">
    <property type="entry name" value="RmlD_sub_bind"/>
    <property type="match status" value="1"/>
</dbReference>
<dbReference type="SUPFAM" id="SSF51735">
    <property type="entry name" value="NAD(P)-binding Rossmann-fold domains"/>
    <property type="match status" value="1"/>
</dbReference>
<sequence length="323" mass="36359">MPGFNYGGDQDEVYTPYRRVLVTGATGLLGRAVYKEFKNNDWDALGCGYNRARPFFLKCNLLDEDAVRGVIQSFQPHVIVHCAAERRPDVVERHTEAAMNLNVHACATLAKEAGGSFLIYISTDYVFDGRNPPYGENDAPNPLNLYGKSKLEGEREILRHCPGAAVLRVPILFGEVEKVEESAVTVLFERVQEGAESCTIDHCQQRFPTYTNDVARVCRNMAERALQDQSLRGIFHYSAKEQMTKYEMTCAIADAFNLPSSHLIPMTEQPAGAGAQRPQNAQLECSRLELLGLSVESTPFKNAIRDSLWPFQHDKRWRQTVFH</sequence>
<name>MAT2B_DANRE</name>
<evidence type="ECO:0000250" key="1">
    <source>
        <dbReference type="UniProtKB" id="Q9NZL9"/>
    </source>
</evidence>
<evidence type="ECO:0000305" key="2"/>
<feature type="chain" id="PRO_0000287524" description="Methionine adenosyltransferase 2 subunit beta">
    <location>
        <begin position="1"/>
        <end position="323"/>
    </location>
</feature>
<feature type="region of interest" description="Required for interaction with MAT2A" evidence="1">
    <location>
        <begin position="308"/>
        <end position="323"/>
    </location>
</feature>
<feature type="binding site" evidence="1">
    <location>
        <begin position="26"/>
        <end position="29"/>
    </location>
    <ligand>
        <name>NADP(+)</name>
        <dbReference type="ChEBI" id="CHEBI:58349"/>
    </ligand>
</feature>
<feature type="binding site" evidence="1">
    <location>
        <begin position="49"/>
        <end position="51"/>
    </location>
    <ligand>
        <name>NADP(+)</name>
        <dbReference type="ChEBI" id="CHEBI:58349"/>
    </ligand>
</feature>
<feature type="binding site" evidence="1">
    <location>
        <begin position="60"/>
        <end position="61"/>
    </location>
    <ligand>
        <name>NADP(+)</name>
        <dbReference type="ChEBI" id="CHEBI:58349"/>
    </ligand>
</feature>
<feature type="binding site" evidence="1">
    <location>
        <position position="82"/>
    </location>
    <ligand>
        <name>NADP(+)</name>
        <dbReference type="ChEBI" id="CHEBI:58349"/>
    </ligand>
</feature>
<feature type="binding site" evidence="1">
    <location>
        <position position="86"/>
    </location>
    <ligand>
        <name>NADP(+)</name>
        <dbReference type="ChEBI" id="CHEBI:58349"/>
    </ligand>
</feature>
<feature type="binding site" evidence="1">
    <location>
        <position position="146"/>
    </location>
    <ligand>
        <name>NADP(+)</name>
        <dbReference type="ChEBI" id="CHEBI:58349"/>
    </ligand>
</feature>
<feature type="binding site" evidence="1">
    <location>
        <position position="172"/>
    </location>
    <ligand>
        <name>NADP(+)</name>
        <dbReference type="ChEBI" id="CHEBI:58349"/>
    </ligand>
</feature>
<accession>Q5BJJ6</accession>
<protein>
    <recommendedName>
        <fullName>Methionine adenosyltransferase 2 subunit beta</fullName>
    </recommendedName>
    <alternativeName>
        <fullName>Methionine adenosyltransferase II beta</fullName>
        <shortName>MAT II beta</shortName>
    </alternativeName>
</protein>
<comment type="function">
    <text evidence="1">Regulatory subunit of S-adenosylmethionine synthetase 2, an enzyme that catalyzes the formation of S-adenosylmethionine from methionine and ATP. Regulates MAT2A catalytic activity by changing its kinetic properties, increasing its affinity for L-methionine. Can bind NADP (in vitro).</text>
</comment>
<comment type="pathway">
    <text evidence="1">Amino-acid biosynthesis; S-adenosyl-L-methionine biosynthesis; S-adenosyl-L-methionine from L-methionine: step 1/1.</text>
</comment>
<comment type="subunit">
    <text evidence="1">Heterotrimer; composed of a catalytic mat2a homodimer that binds one regulatory mat2b chain. Heterohexamer; composed of a central, catalytic mat2a homotetramer flanked on either side by a regulatory mat2b chain. NADP binding increases the affinity for mat2a.</text>
</comment>
<comment type="similarity">
    <text evidence="2">Belongs to the dTDP-4-dehydrorhamnose reductase family. MAT2B subfamily.</text>
</comment>
<proteinExistence type="evidence at transcript level"/>
<gene>
    <name type="primary">mat2b</name>
    <name type="ORF">zgc:110308</name>
</gene>
<reference key="1">
    <citation type="submission" date="2005-03" db="EMBL/GenBank/DDBJ databases">
        <authorList>
            <consortium name="NIH - Zebrafish Gene Collection (ZGC) project"/>
        </authorList>
    </citation>
    <scope>NUCLEOTIDE SEQUENCE [LARGE SCALE MRNA]</scope>
    <source>
        <tissue>Olfactory epithelium</tissue>
    </source>
</reference>
<organism>
    <name type="scientific">Danio rerio</name>
    <name type="common">Zebrafish</name>
    <name type="synonym">Brachydanio rerio</name>
    <dbReference type="NCBI Taxonomy" id="7955"/>
    <lineage>
        <taxon>Eukaryota</taxon>
        <taxon>Metazoa</taxon>
        <taxon>Chordata</taxon>
        <taxon>Craniata</taxon>
        <taxon>Vertebrata</taxon>
        <taxon>Euteleostomi</taxon>
        <taxon>Actinopterygii</taxon>
        <taxon>Neopterygii</taxon>
        <taxon>Teleostei</taxon>
        <taxon>Ostariophysi</taxon>
        <taxon>Cypriniformes</taxon>
        <taxon>Danionidae</taxon>
        <taxon>Danioninae</taxon>
        <taxon>Danio</taxon>
    </lineage>
</organism>
<keyword id="KW-0521">NADP</keyword>
<keyword id="KW-0554">One-carbon metabolism</keyword>
<keyword id="KW-1185">Reference proteome</keyword>